<feature type="chain" id="PRO_0000072722" description="Protein DrgA">
    <location>
        <begin position="1"/>
        <end position="210"/>
    </location>
</feature>
<feature type="sequence conflict" description="In Ref. 2; BAA17909." evidence="1" ref="2">
    <original>H</original>
    <variation>L</variation>
    <location>
        <position position="31"/>
    </location>
</feature>
<feature type="sequence conflict" description="In Ref. 2; BAA17909." evidence="1" ref="2">
    <original>L</original>
    <variation>H</variation>
    <location>
        <position position="45"/>
    </location>
</feature>
<feature type="sequence conflict" description="In Ref. 2." evidence="1" ref="2">
    <original>PGKRRSNSPGRIPLGKLLCLTKVWCLAI</original>
    <variation>RAKGGQTPLEELVWENSF</variation>
    <location>
        <begin position="183"/>
        <end position="210"/>
    </location>
</feature>
<dbReference type="EMBL" id="L29426">
    <property type="protein sequence ID" value="AAA91952.1"/>
    <property type="molecule type" value="Genomic_DNA"/>
</dbReference>
<dbReference type="EMBL" id="BA000022">
    <property type="protein sequence ID" value="BAA17909.1"/>
    <property type="molecule type" value="Genomic_DNA"/>
</dbReference>
<dbReference type="PIR" id="S75047">
    <property type="entry name" value="S75047"/>
</dbReference>
<dbReference type="SMR" id="Q55233"/>
<dbReference type="FunCoup" id="Q55233">
    <property type="interactions" value="62"/>
</dbReference>
<dbReference type="IntAct" id="Q55233">
    <property type="interactions" value="1"/>
</dbReference>
<dbReference type="STRING" id="1148.gene:10498778"/>
<dbReference type="PaxDb" id="1148-1652992"/>
<dbReference type="EnsemblBacteria" id="BAA17909">
    <property type="protein sequence ID" value="BAA17909"/>
    <property type="gene ID" value="BAA17909"/>
</dbReference>
<dbReference type="KEGG" id="syn:slr1719"/>
<dbReference type="eggNOG" id="COG0778">
    <property type="taxonomic scope" value="Bacteria"/>
</dbReference>
<dbReference type="InParanoid" id="Q55233"/>
<dbReference type="PhylomeDB" id="Q55233"/>
<dbReference type="Proteomes" id="UP000001425">
    <property type="component" value="Chromosome"/>
</dbReference>
<dbReference type="GO" id="GO:0016491">
    <property type="term" value="F:oxidoreductase activity"/>
    <property type="evidence" value="ECO:0007669"/>
    <property type="project" value="UniProtKB-KW"/>
</dbReference>
<dbReference type="GO" id="GO:0009635">
    <property type="term" value="P:response to herbicide"/>
    <property type="evidence" value="ECO:0007669"/>
    <property type="project" value="UniProtKB-KW"/>
</dbReference>
<dbReference type="CDD" id="cd02137">
    <property type="entry name" value="MhqN-like"/>
    <property type="match status" value="1"/>
</dbReference>
<dbReference type="Gene3D" id="3.40.109.10">
    <property type="entry name" value="NADH Oxidase"/>
    <property type="match status" value="1"/>
</dbReference>
<dbReference type="InterPro" id="IPR029479">
    <property type="entry name" value="Nitroreductase"/>
</dbReference>
<dbReference type="InterPro" id="IPR000415">
    <property type="entry name" value="Nitroreductase-like"/>
</dbReference>
<dbReference type="PANTHER" id="PTHR43673">
    <property type="entry name" value="NAD(P)H NITROREDUCTASE YDGI-RELATED"/>
    <property type="match status" value="1"/>
</dbReference>
<dbReference type="PANTHER" id="PTHR43673:SF12">
    <property type="entry name" value="PROTEIN DRGA"/>
    <property type="match status" value="1"/>
</dbReference>
<dbReference type="Pfam" id="PF00881">
    <property type="entry name" value="Nitroreductase"/>
    <property type="match status" value="1"/>
</dbReference>
<dbReference type="SUPFAM" id="SSF55469">
    <property type="entry name" value="FMN-dependent nitroreductase-like"/>
    <property type="match status" value="1"/>
</dbReference>
<proteinExistence type="evidence at protein level"/>
<protein>
    <recommendedName>
        <fullName>Protein DrgA</fullName>
    </recommendedName>
</protein>
<evidence type="ECO:0000305" key="1"/>
<keyword id="KW-0903">Direct protein sequencing</keyword>
<keyword id="KW-0285">Flavoprotein</keyword>
<keyword id="KW-0288">FMN</keyword>
<keyword id="KW-0359">Herbicide resistance</keyword>
<keyword id="KW-0520">NAD</keyword>
<keyword id="KW-0521">NADP</keyword>
<keyword id="KW-0560">Oxidoreductase</keyword>
<keyword id="KW-1185">Reference proteome</keyword>
<sequence length="210" mass="23703">MDTFDAIYQRRSVKHFDPDHRLTAEEERKLHEAAIQAPTSFNIQLWRFLIIRDPQLRQTIREKYGNQAQMTDASLLILVAADVNAWDKDPARYWRNAPREVANYLVGAIASFYGGKPQLQRDEAQRSIGMAMQNLMLAAKAMGYDSCPMIGFDLQKVAELVKLPADYAIGPMVAIGKRTEDAPGKRRSNSPGRIPLGKLLCLTKVWCLAI</sequence>
<name>DRGA_SYNY3</name>
<gene>
    <name type="primary">drgA</name>
    <name type="ordered locus">slr1719</name>
</gene>
<comment type="function">
    <text>Controls resistance to the herbicide Dinoseb and metronidazole. Involved in detoxification of Dinoseb via the reduction of the nitro group(s) and this process is accompanied by the formation of toxic superoxide anions.</text>
</comment>
<comment type="cofactor">
    <cofactor evidence="1">
        <name>FMN</name>
        <dbReference type="ChEBI" id="CHEBI:58210"/>
    </cofactor>
</comment>
<comment type="similarity">
    <text evidence="1">Belongs to the nitroreductase family.</text>
</comment>
<reference key="1">
    <citation type="journal article" date="1998" name="FEBS Lett.">
        <title>Resistance to nitrophenolic herbicides and metronidazole in the cyanobacterium Synechocystis sp. PCC 6803 as a result of the inactivation of a nitroreductase-like protein encoded by drgA gene.</title>
        <authorList>
            <person name="Elanskaya I.V."/>
            <person name="Chesnavichene E.A."/>
            <person name="Vernotte C."/>
            <person name="Astier C."/>
        </authorList>
    </citation>
    <scope>NUCLEOTIDE SEQUENCE [GENOMIC DNA]</scope>
</reference>
<reference key="2">
    <citation type="journal article" date="1996" name="DNA Res.">
        <title>Sequence analysis of the genome of the unicellular cyanobacterium Synechocystis sp. strain PCC6803. II. Sequence determination of the entire genome and assignment of potential protein-coding regions.</title>
        <authorList>
            <person name="Kaneko T."/>
            <person name="Sato S."/>
            <person name="Kotani H."/>
            <person name="Tanaka A."/>
            <person name="Asamizu E."/>
            <person name="Nakamura Y."/>
            <person name="Miyajima N."/>
            <person name="Hirosawa M."/>
            <person name="Sugiura M."/>
            <person name="Sasamoto S."/>
            <person name="Kimura T."/>
            <person name="Hosouchi T."/>
            <person name="Matsuno A."/>
            <person name="Muraki A."/>
            <person name="Nakazaki N."/>
            <person name="Naruo K."/>
            <person name="Okumura S."/>
            <person name="Shimpo S."/>
            <person name="Takeuchi C."/>
            <person name="Wada T."/>
            <person name="Watanabe A."/>
            <person name="Yamada M."/>
            <person name="Yasuda M."/>
            <person name="Tabata S."/>
        </authorList>
    </citation>
    <scope>NUCLEOTIDE SEQUENCE [LARGE SCALE GENOMIC DNA]</scope>
    <source>
        <strain>ATCC 27184 / PCC 6803 / Kazusa</strain>
    </source>
</reference>
<reference key="3">
    <citation type="journal article" date="1997" name="Electrophoresis">
        <title>Towards a proteome project of cyanobacterium Synechocystis sp. strain PCC6803: linking 130 protein spots with their respective genes.</title>
        <authorList>
            <person name="Sazuka T."/>
            <person name="Ohara O."/>
        </authorList>
    </citation>
    <scope>PROTEIN SEQUENCE OF 1-17</scope>
</reference>
<accession>Q55233</accession>
<accession>P73850</accession>
<organism>
    <name type="scientific">Synechocystis sp. (strain ATCC 27184 / PCC 6803 / Kazusa)</name>
    <dbReference type="NCBI Taxonomy" id="1111708"/>
    <lineage>
        <taxon>Bacteria</taxon>
        <taxon>Bacillati</taxon>
        <taxon>Cyanobacteriota</taxon>
        <taxon>Cyanophyceae</taxon>
        <taxon>Synechococcales</taxon>
        <taxon>Merismopediaceae</taxon>
        <taxon>Synechocystis</taxon>
    </lineage>
</organism>